<evidence type="ECO:0000250" key="1"/>
<evidence type="ECO:0000250" key="2">
    <source>
        <dbReference type="UniProtKB" id="P13639"/>
    </source>
</evidence>
<evidence type="ECO:0000250" key="3">
    <source>
        <dbReference type="UniProtKB" id="P32324"/>
    </source>
</evidence>
<evidence type="ECO:0000255" key="4">
    <source>
        <dbReference type="PROSITE-ProRule" id="PRU01059"/>
    </source>
</evidence>
<dbReference type="EC" id="3.6.5.-" evidence="3"/>
<dbReference type="EMBL" id="D79219">
    <property type="protein sequence ID" value="BAA11469.1"/>
    <property type="molecule type" value="mRNA"/>
</dbReference>
<dbReference type="SMR" id="Q17152"/>
<dbReference type="GO" id="GO:0005829">
    <property type="term" value="C:cytosol"/>
    <property type="evidence" value="ECO:0007669"/>
    <property type="project" value="TreeGrafter"/>
</dbReference>
<dbReference type="GO" id="GO:1990904">
    <property type="term" value="C:ribonucleoprotein complex"/>
    <property type="evidence" value="ECO:0007669"/>
    <property type="project" value="TreeGrafter"/>
</dbReference>
<dbReference type="GO" id="GO:0005525">
    <property type="term" value="F:GTP binding"/>
    <property type="evidence" value="ECO:0007669"/>
    <property type="project" value="UniProtKB-KW"/>
</dbReference>
<dbReference type="GO" id="GO:0003924">
    <property type="term" value="F:GTPase activity"/>
    <property type="evidence" value="ECO:0007669"/>
    <property type="project" value="InterPro"/>
</dbReference>
<dbReference type="GO" id="GO:0043022">
    <property type="term" value="F:ribosome binding"/>
    <property type="evidence" value="ECO:0007669"/>
    <property type="project" value="TreeGrafter"/>
</dbReference>
<dbReference type="GO" id="GO:0003746">
    <property type="term" value="F:translation elongation factor activity"/>
    <property type="evidence" value="ECO:0007669"/>
    <property type="project" value="UniProtKB-KW"/>
</dbReference>
<dbReference type="CDD" id="cd01681">
    <property type="entry name" value="aeEF2_snRNP_like_IV"/>
    <property type="match status" value="1"/>
</dbReference>
<dbReference type="CDD" id="cd04096">
    <property type="entry name" value="eEF2_snRNP_like_C"/>
    <property type="match status" value="1"/>
</dbReference>
<dbReference type="CDD" id="cd01885">
    <property type="entry name" value="EF2"/>
    <property type="match status" value="1"/>
</dbReference>
<dbReference type="CDD" id="cd16268">
    <property type="entry name" value="EF2_II"/>
    <property type="match status" value="1"/>
</dbReference>
<dbReference type="CDD" id="cd16261">
    <property type="entry name" value="EF2_snRNP_III"/>
    <property type="match status" value="1"/>
</dbReference>
<dbReference type="FunFam" id="3.30.230.10:FF:000112">
    <property type="entry name" value="Eukaryotic translation elongation factor 2"/>
    <property type="match status" value="1"/>
</dbReference>
<dbReference type="FunFam" id="2.40.30.10:FF:000010">
    <property type="entry name" value="Translation elongation factor 2"/>
    <property type="match status" value="1"/>
</dbReference>
<dbReference type="FunFam" id="3.30.70.240:FF:000003">
    <property type="entry name" value="Translation elongation factor 2"/>
    <property type="match status" value="1"/>
</dbReference>
<dbReference type="FunFam" id="3.30.70.870:FF:000002">
    <property type="entry name" value="Translation elongation factor 2"/>
    <property type="match status" value="1"/>
</dbReference>
<dbReference type="FunFam" id="3.40.50.300:FF:000058">
    <property type="entry name" value="Translation elongation factor 2"/>
    <property type="match status" value="1"/>
</dbReference>
<dbReference type="Gene3D" id="3.30.230.10">
    <property type="match status" value="1"/>
</dbReference>
<dbReference type="Gene3D" id="3.30.70.240">
    <property type="match status" value="1"/>
</dbReference>
<dbReference type="Gene3D" id="3.30.70.870">
    <property type="entry name" value="Elongation Factor G (Translational Gtpase), domain 3"/>
    <property type="match status" value="1"/>
</dbReference>
<dbReference type="Gene3D" id="3.40.50.300">
    <property type="entry name" value="P-loop containing nucleotide triphosphate hydrolases"/>
    <property type="match status" value="1"/>
</dbReference>
<dbReference type="Gene3D" id="2.40.30.10">
    <property type="entry name" value="Translation factors"/>
    <property type="match status" value="1"/>
</dbReference>
<dbReference type="InterPro" id="IPR041095">
    <property type="entry name" value="EFG_II"/>
</dbReference>
<dbReference type="InterPro" id="IPR035647">
    <property type="entry name" value="EFG_III/V"/>
</dbReference>
<dbReference type="InterPro" id="IPR000640">
    <property type="entry name" value="EFG_V-like"/>
</dbReference>
<dbReference type="InterPro" id="IPR004161">
    <property type="entry name" value="EFTu-like_2"/>
</dbReference>
<dbReference type="InterPro" id="IPR031157">
    <property type="entry name" value="G_TR_CS"/>
</dbReference>
<dbReference type="InterPro" id="IPR027417">
    <property type="entry name" value="P-loop_NTPase"/>
</dbReference>
<dbReference type="InterPro" id="IPR020568">
    <property type="entry name" value="Ribosomal_Su5_D2-typ_SF"/>
</dbReference>
<dbReference type="InterPro" id="IPR014721">
    <property type="entry name" value="Ribsml_uS5_D2-typ_fold_subgr"/>
</dbReference>
<dbReference type="InterPro" id="IPR005225">
    <property type="entry name" value="Small_GTP-bd"/>
</dbReference>
<dbReference type="InterPro" id="IPR000795">
    <property type="entry name" value="T_Tr_GTP-bd_dom"/>
</dbReference>
<dbReference type="InterPro" id="IPR009000">
    <property type="entry name" value="Transl_B-barrel_sf"/>
</dbReference>
<dbReference type="InterPro" id="IPR005517">
    <property type="entry name" value="Transl_elong_EFG/EF2_IV"/>
</dbReference>
<dbReference type="NCBIfam" id="TIGR00231">
    <property type="entry name" value="small_GTP"/>
    <property type="match status" value="1"/>
</dbReference>
<dbReference type="PANTHER" id="PTHR42908:SF10">
    <property type="entry name" value="EUKARYOTIC TRANSLATION ELONGATION FACTOR 2"/>
    <property type="match status" value="1"/>
</dbReference>
<dbReference type="PANTHER" id="PTHR42908">
    <property type="entry name" value="TRANSLATION ELONGATION FACTOR-RELATED"/>
    <property type="match status" value="1"/>
</dbReference>
<dbReference type="Pfam" id="PF00679">
    <property type="entry name" value="EFG_C"/>
    <property type="match status" value="1"/>
</dbReference>
<dbReference type="Pfam" id="PF14492">
    <property type="entry name" value="EFG_III"/>
    <property type="match status" value="1"/>
</dbReference>
<dbReference type="Pfam" id="PF03764">
    <property type="entry name" value="EFG_IV"/>
    <property type="match status" value="1"/>
</dbReference>
<dbReference type="Pfam" id="PF00009">
    <property type="entry name" value="GTP_EFTU"/>
    <property type="match status" value="1"/>
</dbReference>
<dbReference type="Pfam" id="PF03144">
    <property type="entry name" value="GTP_EFTU_D2"/>
    <property type="match status" value="1"/>
</dbReference>
<dbReference type="PRINTS" id="PR00315">
    <property type="entry name" value="ELONGATNFCT"/>
</dbReference>
<dbReference type="SMART" id="SM00838">
    <property type="entry name" value="EFG_C"/>
    <property type="match status" value="1"/>
</dbReference>
<dbReference type="SMART" id="SM00889">
    <property type="entry name" value="EFG_IV"/>
    <property type="match status" value="1"/>
</dbReference>
<dbReference type="SUPFAM" id="SSF54980">
    <property type="entry name" value="EF-G C-terminal domain-like"/>
    <property type="match status" value="2"/>
</dbReference>
<dbReference type="SUPFAM" id="SSF52540">
    <property type="entry name" value="P-loop containing nucleoside triphosphate hydrolases"/>
    <property type="match status" value="1"/>
</dbReference>
<dbReference type="SUPFAM" id="SSF54211">
    <property type="entry name" value="Ribosomal protein S5 domain 2-like"/>
    <property type="match status" value="1"/>
</dbReference>
<dbReference type="SUPFAM" id="SSF50447">
    <property type="entry name" value="Translation proteins"/>
    <property type="match status" value="1"/>
</dbReference>
<dbReference type="PROSITE" id="PS00301">
    <property type="entry name" value="G_TR_1"/>
    <property type="match status" value="1"/>
</dbReference>
<dbReference type="PROSITE" id="PS51722">
    <property type="entry name" value="G_TR_2"/>
    <property type="match status" value="1"/>
</dbReference>
<organism>
    <name type="scientific">Blastocystis hominis</name>
    <dbReference type="NCBI Taxonomy" id="12968"/>
    <lineage>
        <taxon>Eukaryota</taxon>
        <taxon>Sar</taxon>
        <taxon>Stramenopiles</taxon>
        <taxon>Bigyra</taxon>
        <taxon>Opalozoa</taxon>
        <taxon>Opalinata</taxon>
        <taxon>Blastocystidae</taxon>
        <taxon>Blastocystis</taxon>
    </lineage>
</organism>
<protein>
    <recommendedName>
        <fullName>Elongation factor 2</fullName>
        <shortName>EF-2</shortName>
        <ecNumber evidence="3">3.6.5.-</ecNumber>
    </recommendedName>
</protein>
<comment type="function">
    <text evidence="3">Catalyzes the GTP-dependent ribosomal translocation step during translation elongation. During this step, the ribosome changes from the pre-translocational (PRE) to the post-translocational (POST) state as the newly formed A-site-bound peptidyl-tRNA and P-site-bound deacylated tRNA move to the P and E sites, respectively. Catalyzes the coordinated movement of the two tRNA molecules, the mRNA and conformational changes in the ribosome.</text>
</comment>
<comment type="catalytic activity">
    <reaction evidence="3">
        <text>GTP + H2O = GDP + phosphate + H(+)</text>
        <dbReference type="Rhea" id="RHEA:19669"/>
        <dbReference type="ChEBI" id="CHEBI:15377"/>
        <dbReference type="ChEBI" id="CHEBI:15378"/>
        <dbReference type="ChEBI" id="CHEBI:37565"/>
        <dbReference type="ChEBI" id="CHEBI:43474"/>
        <dbReference type="ChEBI" id="CHEBI:58189"/>
    </reaction>
    <physiologicalReaction direction="left-to-right" evidence="3">
        <dbReference type="Rhea" id="RHEA:19670"/>
    </physiologicalReaction>
</comment>
<comment type="subcellular location">
    <subcellularLocation>
        <location evidence="3">Cytoplasm</location>
    </subcellularLocation>
</comment>
<comment type="PTM">
    <text evidence="1 2">Phosphorylation by EF-2 kinase completely inactivates EF-2.</text>
</comment>
<comment type="similarity">
    <text evidence="4">Belongs to the TRAFAC class translation factor GTPase superfamily. Classic translation factor GTPase family. EF-G/EF-2 subfamily.</text>
</comment>
<sequence>MVNFTIDQIRHMMNMTHNIRNLSVVAHVDHGKSTLTDALVSKAGIISKKAAGDARFTDTRADEQERCITIKSTGISLYFEYDPETIDKQAAAPLNPTEEGDPTEEDIEIKQNSYLINLIDSPGHVDFSSEVTASLRVTDGALVVVDSVGGVCVQTETVLRQALAERIRPVLSCMCNKLDRVIAELQLDPEEAYHKLMKSVESVNVIIATYPDEAVGDIQVYPNQGTVAFGSGLQQWGFTRKFARLYAKKFGIDETKMMERLWGDYFFDAENKKWAKTDKKDERKAQGKKPLKRAFVQFVLDPVYGLYRALNEGRTEKYMKMLDTLGVTLTSEEKDLRDKALVKRVMSKWLPAADALLEMIVLHLPSPVDAQKYRAPLLYDGPEDDEACTAMKKCDPNGCLMMYVSKMVPTADQSRFYAFGRVFSGIIRSGQKVRILGPKYSATNKSDLLIKSVQRTVIMMGRYVEQVADIPCGNTCGLVGVDQYILKQATLTDCESAMTIKMMKFSVSPVVRVAVEPKNPGDLPRLVEGLKRLSKSDPMVVVITNTEAGEHIIAGAGELHLEICLKDLQDDFMKGTPIKISPPVVEFRESVNQATTEPGLAKSPNKHNRLYVNVEPMPDGLAQEIEDQKVTPEQEFKERARYMSTTYGMDVELMRKIWAFGPNGNGPNIFCEATHGVQYLNEIKESVVAGFGAACAAGPIVDEPCRNVLCKLMDVTLHADSIHRGMGQIMPPARRVVLGTMLKAEPILVEPVFLCEIQVPRAVSGGIYGVLTRRRGHVFEEIDEVGTPMMNIKSYLPVAESFGFTQDLRGATAGQAFPQCVFSHWQAYNGGDPLTEGTKTNEMVKSIRNRKGLAPEVPTPERYLDKL</sequence>
<proteinExistence type="evidence at transcript level"/>
<accession>Q17152</accession>
<feature type="chain" id="PRO_0000091007" description="Elongation factor 2">
    <location>
        <begin position="1"/>
        <end position="867"/>
    </location>
</feature>
<feature type="domain" description="tr-type G" evidence="4">
    <location>
        <begin position="17"/>
        <end position="368"/>
    </location>
</feature>
<feature type="binding site" evidence="3">
    <location>
        <begin position="26"/>
        <end position="33"/>
    </location>
    <ligand>
        <name>GTP</name>
        <dbReference type="ChEBI" id="CHEBI:37565"/>
    </ligand>
</feature>
<feature type="binding site" evidence="3">
    <location>
        <begin position="176"/>
        <end position="179"/>
    </location>
    <ligand>
        <name>GTP</name>
        <dbReference type="ChEBI" id="CHEBI:37565"/>
    </ligand>
</feature>
<feature type="binding site" evidence="3">
    <location>
        <begin position="231"/>
        <end position="233"/>
    </location>
    <ligand>
        <name>GTP</name>
        <dbReference type="ChEBI" id="CHEBI:37565"/>
    </ligand>
</feature>
<feature type="modified residue" description="Phosphothreonine" evidence="2">
    <location>
        <position position="57"/>
    </location>
</feature>
<feature type="modified residue" description="Phosphothreonine" evidence="2">
    <location>
        <position position="59"/>
    </location>
</feature>
<feature type="modified residue" description="Diphthamide" evidence="3">
    <location>
        <position position="723"/>
    </location>
</feature>
<keyword id="KW-0963">Cytoplasm</keyword>
<keyword id="KW-0251">Elongation factor</keyword>
<keyword id="KW-0342">GTP-binding</keyword>
<keyword id="KW-0378">Hydrolase</keyword>
<keyword id="KW-0547">Nucleotide-binding</keyword>
<keyword id="KW-0597">Phosphoprotein</keyword>
<keyword id="KW-0648">Protein biosynthesis</keyword>
<name>EF2_BLAHO</name>
<reference key="1">
    <citation type="submission" date="1995-12" db="EMBL/GenBank/DDBJ databases">
        <authorList>
            <person name="Nakamura Y."/>
            <person name="Hashimoto T."/>
            <person name="Yoshikawa H."/>
            <person name="Kamaishi T."/>
            <person name="Nakamura F."/>
            <person name="Okamoto K.I."/>
            <person name="Hasegawa M."/>
        </authorList>
    </citation>
    <scope>NUCLEOTIDE SEQUENCE [MRNA]</scope>
    <source>
        <strain>HE87-1</strain>
    </source>
</reference>